<accession>Q9PTX2</accession>
<gene>
    <name evidence="2" type="primary">cirbp</name>
</gene>
<dbReference type="EMBL" id="AB025351">
    <property type="protein sequence ID" value="BAA88978.1"/>
    <property type="molecule type" value="mRNA"/>
</dbReference>
<dbReference type="SMR" id="Q9PTX2"/>
<dbReference type="GO" id="GO:0005737">
    <property type="term" value="C:cytoplasm"/>
    <property type="evidence" value="ECO:0000250"/>
    <property type="project" value="UniProtKB"/>
</dbReference>
<dbReference type="GO" id="GO:0005654">
    <property type="term" value="C:nucleoplasm"/>
    <property type="evidence" value="ECO:0007669"/>
    <property type="project" value="UniProtKB-SubCell"/>
</dbReference>
<dbReference type="GO" id="GO:0005634">
    <property type="term" value="C:nucleus"/>
    <property type="evidence" value="ECO:0000250"/>
    <property type="project" value="UniProtKB"/>
</dbReference>
<dbReference type="GO" id="GO:0019899">
    <property type="term" value="F:enzyme binding"/>
    <property type="evidence" value="ECO:0000250"/>
    <property type="project" value="UniProtKB"/>
</dbReference>
<dbReference type="GO" id="GO:0003730">
    <property type="term" value="F:mRNA 3'-UTR binding"/>
    <property type="evidence" value="ECO:0000250"/>
    <property type="project" value="UniProtKB"/>
</dbReference>
<dbReference type="GO" id="GO:0003729">
    <property type="term" value="F:mRNA binding"/>
    <property type="evidence" value="ECO:0000250"/>
    <property type="project" value="UniProtKB"/>
</dbReference>
<dbReference type="GO" id="GO:0043022">
    <property type="term" value="F:ribosome binding"/>
    <property type="evidence" value="ECO:0000250"/>
    <property type="project" value="UniProtKB"/>
</dbReference>
<dbReference type="GO" id="GO:0016477">
    <property type="term" value="P:cell migration"/>
    <property type="evidence" value="ECO:0000250"/>
    <property type="project" value="UniProtKB"/>
</dbReference>
<dbReference type="GO" id="GO:0009792">
    <property type="term" value="P:embryo development ending in birth or egg hatching"/>
    <property type="evidence" value="ECO:0000250"/>
    <property type="project" value="UniProtKB"/>
</dbReference>
<dbReference type="GO" id="GO:0007369">
    <property type="term" value="P:gastrulation"/>
    <property type="evidence" value="ECO:0000250"/>
    <property type="project" value="UniProtKB"/>
</dbReference>
<dbReference type="GO" id="GO:0042750">
    <property type="term" value="P:hibernation"/>
    <property type="evidence" value="ECO:0000270"/>
    <property type="project" value="UniProtKB"/>
</dbReference>
<dbReference type="GO" id="GO:0048255">
    <property type="term" value="P:mRNA stabilization"/>
    <property type="evidence" value="ECO:0000250"/>
    <property type="project" value="UniProtKB"/>
</dbReference>
<dbReference type="GO" id="GO:0060212">
    <property type="term" value="P:negative regulation of nuclear-transcribed mRNA poly(A) tail shortening"/>
    <property type="evidence" value="ECO:0000250"/>
    <property type="project" value="UniProtKB"/>
</dbReference>
<dbReference type="GO" id="GO:0022008">
    <property type="term" value="P:neurogenesis"/>
    <property type="evidence" value="ECO:0000250"/>
    <property type="project" value="UniProtKB"/>
</dbReference>
<dbReference type="GO" id="GO:0045727">
    <property type="term" value="P:positive regulation of translation"/>
    <property type="evidence" value="ECO:0000250"/>
    <property type="project" value="UniProtKB"/>
</dbReference>
<dbReference type="GO" id="GO:0048793">
    <property type="term" value="P:pronephros development"/>
    <property type="evidence" value="ECO:0000250"/>
    <property type="project" value="UniProtKB"/>
</dbReference>
<dbReference type="GO" id="GO:0009409">
    <property type="term" value="P:response to cold"/>
    <property type="evidence" value="ECO:0000250"/>
    <property type="project" value="UniProtKB"/>
</dbReference>
<dbReference type="CDD" id="cd12449">
    <property type="entry name" value="RRM_CIRBP_RBM3"/>
    <property type="match status" value="1"/>
</dbReference>
<dbReference type="FunFam" id="3.30.70.330:FF:000174">
    <property type="entry name" value="cold-inducible RNA-binding protein isoform X2"/>
    <property type="match status" value="1"/>
</dbReference>
<dbReference type="Gene3D" id="3.30.70.330">
    <property type="match status" value="1"/>
</dbReference>
<dbReference type="InterPro" id="IPR012677">
    <property type="entry name" value="Nucleotide-bd_a/b_plait_sf"/>
</dbReference>
<dbReference type="InterPro" id="IPR035979">
    <property type="entry name" value="RBD_domain_sf"/>
</dbReference>
<dbReference type="InterPro" id="IPR050441">
    <property type="entry name" value="RBM"/>
</dbReference>
<dbReference type="InterPro" id="IPR034278">
    <property type="entry name" value="RBM3/CIRBP_RRM"/>
</dbReference>
<dbReference type="InterPro" id="IPR000504">
    <property type="entry name" value="RRM_dom"/>
</dbReference>
<dbReference type="InterPro" id="IPR003954">
    <property type="entry name" value="RRM_dom_euk"/>
</dbReference>
<dbReference type="PANTHER" id="PTHR48034">
    <property type="entry name" value="TRANSFORMER-2 SEX-DETERMINING PROTEIN-RELATED"/>
    <property type="match status" value="1"/>
</dbReference>
<dbReference type="Pfam" id="PF00076">
    <property type="entry name" value="RRM_1"/>
    <property type="match status" value="1"/>
</dbReference>
<dbReference type="SMART" id="SM00360">
    <property type="entry name" value="RRM"/>
    <property type="match status" value="1"/>
</dbReference>
<dbReference type="SMART" id="SM00361">
    <property type="entry name" value="RRM_1"/>
    <property type="match status" value="1"/>
</dbReference>
<dbReference type="SUPFAM" id="SSF54928">
    <property type="entry name" value="RNA-binding domain, RBD"/>
    <property type="match status" value="1"/>
</dbReference>
<dbReference type="PROSITE" id="PS50102">
    <property type="entry name" value="RRM"/>
    <property type="match status" value="1"/>
</dbReference>
<name>CIRBP_AQUCT</name>
<proteinExistence type="evidence at transcript level"/>
<keyword id="KW-0963">Cytoplasm</keyword>
<keyword id="KW-0217">Developmental protein</keyword>
<keyword id="KW-0488">Methylation</keyword>
<keyword id="KW-0539">Nucleus</keyword>
<keyword id="KW-0694">RNA-binding</keyword>
<keyword id="KW-0346">Stress response</keyword>
<reference evidence="8 9" key="1">
    <citation type="journal article" date="2000" name="Comp. Biochem. Physiol.">
        <title>Cloning and characterization of amphibian cold inducible RNA-binding protein.</title>
        <authorList>
            <person name="Saito T."/>
            <person name="Sugimoto K."/>
            <person name="Adachi Y."/>
            <person name="Wu Q."/>
            <person name="Mori K.J."/>
        </authorList>
    </citation>
    <scope>NUCLEOTIDE SEQUENCE [MRNA]</scope>
    <scope>PUTATIVE FUNCTION</scope>
    <scope>DEVELOPMENTAL STAGE</scope>
    <source>
        <tissue evidence="9">Liver</tissue>
    </source>
</reference>
<evidence type="ECO:0000250" key="1"/>
<evidence type="ECO:0000250" key="2">
    <source>
        <dbReference type="UniProtKB" id="Q14011"/>
    </source>
</evidence>
<evidence type="ECO:0000250" key="3">
    <source>
        <dbReference type="UniProtKB" id="Q9DED4"/>
    </source>
</evidence>
<evidence type="ECO:0000255" key="4">
    <source>
        <dbReference type="PROSITE-ProRule" id="PRU00176"/>
    </source>
</evidence>
<evidence type="ECO:0000256" key="5">
    <source>
        <dbReference type="SAM" id="MobiDB-lite"/>
    </source>
</evidence>
<evidence type="ECO:0000269" key="6">
    <source>
    </source>
</evidence>
<evidence type="ECO:0000303" key="7">
    <source>
    </source>
</evidence>
<evidence type="ECO:0000305" key="8"/>
<evidence type="ECO:0000312" key="9">
    <source>
        <dbReference type="EMBL" id="BAA88978.1"/>
    </source>
</evidence>
<feature type="chain" id="PRO_0000390929" description="Cold-inducible RNA-binding protein">
    <location>
        <begin position="1"/>
        <end position="164"/>
    </location>
</feature>
<feature type="domain" description="RRM" evidence="4">
    <location>
        <begin position="6"/>
        <end position="84"/>
    </location>
</feature>
<feature type="region of interest" description="Disordered" evidence="5">
    <location>
        <begin position="65"/>
        <end position="164"/>
    </location>
</feature>
<feature type="compositionally biased region" description="Gly residues" evidence="5">
    <location>
        <begin position="93"/>
        <end position="118"/>
    </location>
</feature>
<feature type="compositionally biased region" description="Basic and acidic residues" evidence="5">
    <location>
        <begin position="155"/>
        <end position="164"/>
    </location>
</feature>
<sequence>MSCDEGKLFVGGLSFDTDEQCLETVFSKYGQIQEVVVVKDRETKRSRGFGFVTFENCEDAKDAMAGMNGKTVDGRQIRVDQAGKSSNDRRGGYRGGSSGGGRGFFRGGRGRGGGGYGGSSRFDNRSGGGYGGWIPDYYSSGRESSYGDRSAGGRSYRDSYDSYG</sequence>
<comment type="function">
    <text evidence="1">Cold-inducible mRNA binding protein. Acts cooperatively with elavl1/elrA to stabilize AU-rich element (ARE)-containing mRNAs by binding to them and inhibiting their deadenylation. Essential for embryonic gastrulation and neural development, acting to maintain the expression of a set of adhesion molecules, and cell movement during embryogenesis. Required for pronephros development (By similarity). May play a role in hibernation.</text>
</comment>
<comment type="subunit">
    <text evidence="3">Interacts with prmt1. Interacts with elavl1/elrA (via RRM3). Associates with ribosomes (By similarity).</text>
</comment>
<comment type="subcellular location">
    <subcellularLocation>
        <location evidence="3">Nucleus</location>
        <location evidence="3">Nucleoplasm</location>
    </subcellularLocation>
    <subcellularLocation>
        <location evidence="3">Cytoplasm</location>
    </subcellularLocation>
    <text evidence="3">Shuttles between the nucleus and cytoplasm. Predominantly cytoplasmic in oocytes. Translocates from the nucleus to the cytoplasm upon arginine methylation (By similarity).</text>
</comment>
<comment type="developmental stage">
    <text evidence="6">Expression is stronger in winter than in summer.</text>
</comment>
<comment type="domain">
    <text evidence="3">The arginine, glycine rich domain, which contains a number of RGG motifs, is necessary to regulate nucleocytoplasmic localization.</text>
</comment>
<comment type="PTM">
    <text evidence="3">Methylated on arginine residues within RGG motifs. Methylation by prmt1 promotes cytoplasmic accumulation (By similarity).</text>
</comment>
<organism>
    <name type="scientific">Aquarana catesbeiana</name>
    <name type="common">American bullfrog</name>
    <name type="synonym">Rana catesbeiana</name>
    <dbReference type="NCBI Taxonomy" id="8400"/>
    <lineage>
        <taxon>Eukaryota</taxon>
        <taxon>Metazoa</taxon>
        <taxon>Chordata</taxon>
        <taxon>Craniata</taxon>
        <taxon>Vertebrata</taxon>
        <taxon>Euteleostomi</taxon>
        <taxon>Amphibia</taxon>
        <taxon>Batrachia</taxon>
        <taxon>Anura</taxon>
        <taxon>Neobatrachia</taxon>
        <taxon>Ranoidea</taxon>
        <taxon>Ranidae</taxon>
        <taxon>Aquarana</taxon>
    </lineage>
</organism>
<protein>
    <recommendedName>
        <fullName evidence="7">Cold-inducible RNA-binding protein</fullName>
        <shortName evidence="9">BFCIRP</shortName>
    </recommendedName>
    <alternativeName>
        <fullName evidence="2">Glycine-rich RNA-binding protein CIRP</fullName>
    </alternativeName>
</protein>